<protein>
    <recommendedName>
        <fullName evidence="1">thr operon leader peptide</fullName>
    </recommendedName>
    <alternativeName>
        <fullName evidence="1">thr operon attenuator</fullName>
    </alternativeName>
</protein>
<accession>Q04208</accession>
<proteinExistence type="inferred from homology"/>
<reference key="1">
    <citation type="journal article" date="1993" name="J. Bacteriol.">
        <title>Nucleotide sequence of the Serratia marcescens threonine operon and analysis of the threonine operon mutations which alter feedback inhibition of both aspartokinase I and homoserine dehydrogenase I.</title>
        <authorList>
            <person name="Omori K."/>
            <person name="Suzuki S."/>
            <person name="Komatsubara S."/>
        </authorList>
    </citation>
    <scope>NUCLEOTIDE SEQUENCE [GENOMIC DNA]</scope>
    <source>
        <strain>Sr41</strain>
    </source>
</reference>
<name>LPT_SERMA</name>
<organism>
    <name type="scientific">Serratia marcescens</name>
    <dbReference type="NCBI Taxonomy" id="615"/>
    <lineage>
        <taxon>Bacteria</taxon>
        <taxon>Pseudomonadati</taxon>
        <taxon>Pseudomonadota</taxon>
        <taxon>Gammaproteobacteria</taxon>
        <taxon>Enterobacterales</taxon>
        <taxon>Yersiniaceae</taxon>
        <taxon>Serratia</taxon>
    </lineage>
</organism>
<feature type="peptide" id="PRO_0000044009" description="thr operon leader peptide">
    <location>
        <begin position="1"/>
        <end position="22"/>
    </location>
</feature>
<feature type="region of interest" description="Disordered" evidence="2">
    <location>
        <begin position="1"/>
        <end position="22"/>
    </location>
</feature>
<feature type="compositionally biased region" description="Low complexity" evidence="2">
    <location>
        <begin position="7"/>
        <end position="22"/>
    </location>
</feature>
<sequence length="22" mass="2239">MRNISLTTTIITTTDTTGNGAG</sequence>
<dbReference type="EMBL" id="D10385">
    <property type="protein sequence ID" value="BAA38473.1"/>
    <property type="molecule type" value="Genomic_DNA"/>
</dbReference>
<dbReference type="EMBL" id="D10386">
    <property type="protein sequence ID" value="BAA38476.1"/>
    <property type="molecule type" value="Genomic_DNA"/>
</dbReference>
<dbReference type="EMBL" id="D10387">
    <property type="protein sequence ID" value="BAA38479.1"/>
    <property type="molecule type" value="Genomic_DNA"/>
</dbReference>
<dbReference type="EMBL" id="X60821">
    <property type="protein sequence ID" value="CAA43211.1"/>
    <property type="molecule type" value="Genomic_DNA"/>
</dbReference>
<dbReference type="PIR" id="A47057">
    <property type="entry name" value="A47057"/>
</dbReference>
<dbReference type="STRING" id="273526.SMDB11_0001A"/>
<dbReference type="GO" id="GO:0009088">
    <property type="term" value="P:threonine biosynthetic process"/>
    <property type="evidence" value="ECO:0007669"/>
    <property type="project" value="UniProtKB-UniRule"/>
</dbReference>
<dbReference type="GO" id="GO:0031556">
    <property type="term" value="P:transcriptional attenuation by ribosome"/>
    <property type="evidence" value="ECO:0007669"/>
    <property type="project" value="UniProtKB-UniRule"/>
</dbReference>
<dbReference type="HAMAP" id="MF_01907">
    <property type="entry name" value="Leader_Thr"/>
    <property type="match status" value="1"/>
</dbReference>
<dbReference type="InterPro" id="IPR011720">
    <property type="entry name" value="Thr_lead_pept"/>
</dbReference>
<dbReference type="NCBIfam" id="TIGR02077">
    <property type="entry name" value="thr_lead_pep"/>
    <property type="match status" value="1"/>
</dbReference>
<dbReference type="Pfam" id="PF08254">
    <property type="entry name" value="Leader_Thr"/>
    <property type="match status" value="1"/>
</dbReference>
<comment type="function">
    <text>This protein is involved in control of the biosynthesis of threonine.</text>
</comment>
<comment type="similarity">
    <text evidence="1">Belongs to the thr operon leader peptide family.</text>
</comment>
<evidence type="ECO:0000255" key="1">
    <source>
        <dbReference type="HAMAP-Rule" id="MF_01907"/>
    </source>
</evidence>
<evidence type="ECO:0000256" key="2">
    <source>
        <dbReference type="SAM" id="MobiDB-lite"/>
    </source>
</evidence>
<gene>
    <name evidence="1" type="primary">thrL</name>
</gene>
<keyword id="KW-0028">Amino-acid biosynthesis</keyword>
<keyword id="KW-0428">Leader peptide</keyword>
<keyword id="KW-0791">Threonine biosynthesis</keyword>